<sequence>MNWNAHGAKILDMIRNSKPLVHHITNLVVMNDTANVTLHLGALPVMAHAVEEMEEMTSIASALVINIGTLSKHWIEAMFKAGKTANDKGIPIILDPVGAGATSYRTETCHRLLEELSVSVIRGNLGEVSILAGLGGEVKGVESVSAGGDAVDVAKALAAKQNCTVSITGKEDVISDGTRTVLVDNGHEWLTTLTGTGCSSTTAVAAFSAVERIPVTAAACALMCYGLAAEIAAPQAKGPASFKVAFYDALYNLNAEQIEKGGRVREVS</sequence>
<dbReference type="EC" id="2.7.1.50" evidence="1"/>
<dbReference type="EMBL" id="CP001322">
    <property type="protein sequence ID" value="ACL02390.1"/>
    <property type="molecule type" value="Genomic_DNA"/>
</dbReference>
<dbReference type="RefSeq" id="WP_012609829.1">
    <property type="nucleotide sequence ID" value="NC_011768.1"/>
</dbReference>
<dbReference type="SMR" id="B8FJW2"/>
<dbReference type="KEGG" id="dal:Dalk_0685"/>
<dbReference type="eggNOG" id="COG2145">
    <property type="taxonomic scope" value="Bacteria"/>
</dbReference>
<dbReference type="HOGENOM" id="CLU_019943_0_1_7"/>
<dbReference type="UniPathway" id="UPA00060">
    <property type="reaction ID" value="UER00139"/>
</dbReference>
<dbReference type="Proteomes" id="UP000000739">
    <property type="component" value="Chromosome"/>
</dbReference>
<dbReference type="GO" id="GO:0005524">
    <property type="term" value="F:ATP binding"/>
    <property type="evidence" value="ECO:0007669"/>
    <property type="project" value="UniProtKB-UniRule"/>
</dbReference>
<dbReference type="GO" id="GO:0004417">
    <property type="term" value="F:hydroxyethylthiazole kinase activity"/>
    <property type="evidence" value="ECO:0007669"/>
    <property type="project" value="UniProtKB-UniRule"/>
</dbReference>
<dbReference type="GO" id="GO:0000287">
    <property type="term" value="F:magnesium ion binding"/>
    <property type="evidence" value="ECO:0007669"/>
    <property type="project" value="UniProtKB-UniRule"/>
</dbReference>
<dbReference type="GO" id="GO:0009228">
    <property type="term" value="P:thiamine biosynthetic process"/>
    <property type="evidence" value="ECO:0007669"/>
    <property type="project" value="UniProtKB-KW"/>
</dbReference>
<dbReference type="GO" id="GO:0009229">
    <property type="term" value="P:thiamine diphosphate biosynthetic process"/>
    <property type="evidence" value="ECO:0007669"/>
    <property type="project" value="UniProtKB-UniRule"/>
</dbReference>
<dbReference type="CDD" id="cd01170">
    <property type="entry name" value="THZ_kinase"/>
    <property type="match status" value="1"/>
</dbReference>
<dbReference type="Gene3D" id="3.40.1190.20">
    <property type="match status" value="1"/>
</dbReference>
<dbReference type="HAMAP" id="MF_00228">
    <property type="entry name" value="Thz_kinase"/>
    <property type="match status" value="1"/>
</dbReference>
<dbReference type="InterPro" id="IPR000417">
    <property type="entry name" value="Hyethyz_kinase"/>
</dbReference>
<dbReference type="InterPro" id="IPR029056">
    <property type="entry name" value="Ribokinase-like"/>
</dbReference>
<dbReference type="NCBIfam" id="NF006830">
    <property type="entry name" value="PRK09355.1"/>
    <property type="match status" value="1"/>
</dbReference>
<dbReference type="NCBIfam" id="TIGR00694">
    <property type="entry name" value="thiM"/>
    <property type="match status" value="1"/>
</dbReference>
<dbReference type="Pfam" id="PF02110">
    <property type="entry name" value="HK"/>
    <property type="match status" value="1"/>
</dbReference>
<dbReference type="PIRSF" id="PIRSF000513">
    <property type="entry name" value="Thz_kinase"/>
    <property type="match status" value="1"/>
</dbReference>
<dbReference type="PRINTS" id="PR01099">
    <property type="entry name" value="HYETHTZKNASE"/>
</dbReference>
<dbReference type="SUPFAM" id="SSF53613">
    <property type="entry name" value="Ribokinase-like"/>
    <property type="match status" value="1"/>
</dbReference>
<organism>
    <name type="scientific">Desulfatibacillum aliphaticivorans</name>
    <dbReference type="NCBI Taxonomy" id="218208"/>
    <lineage>
        <taxon>Bacteria</taxon>
        <taxon>Pseudomonadati</taxon>
        <taxon>Thermodesulfobacteriota</taxon>
        <taxon>Desulfobacteria</taxon>
        <taxon>Desulfobacterales</taxon>
        <taxon>Desulfatibacillaceae</taxon>
        <taxon>Desulfatibacillum</taxon>
    </lineage>
</organism>
<feature type="chain" id="PRO_1000198115" description="Hydroxyethylthiazole kinase">
    <location>
        <begin position="1"/>
        <end position="268"/>
    </location>
</feature>
<feature type="binding site" evidence="1">
    <location>
        <position position="46"/>
    </location>
    <ligand>
        <name>substrate</name>
    </ligand>
</feature>
<feature type="binding site" evidence="1">
    <location>
        <position position="122"/>
    </location>
    <ligand>
        <name>ATP</name>
        <dbReference type="ChEBI" id="CHEBI:30616"/>
    </ligand>
</feature>
<feature type="binding site" evidence="1">
    <location>
        <position position="168"/>
    </location>
    <ligand>
        <name>ATP</name>
        <dbReference type="ChEBI" id="CHEBI:30616"/>
    </ligand>
</feature>
<feature type="binding site" evidence="1">
    <location>
        <position position="195"/>
    </location>
    <ligand>
        <name>substrate</name>
    </ligand>
</feature>
<proteinExistence type="inferred from homology"/>
<name>THIM_DESAL</name>
<gene>
    <name evidence="1" type="primary">thiM</name>
    <name type="ordered locus">Dalk_0685</name>
</gene>
<keyword id="KW-0067">ATP-binding</keyword>
<keyword id="KW-0418">Kinase</keyword>
<keyword id="KW-0460">Magnesium</keyword>
<keyword id="KW-0479">Metal-binding</keyword>
<keyword id="KW-0547">Nucleotide-binding</keyword>
<keyword id="KW-1185">Reference proteome</keyword>
<keyword id="KW-0784">Thiamine biosynthesis</keyword>
<keyword id="KW-0808">Transferase</keyword>
<reference key="1">
    <citation type="journal article" date="2012" name="Environ. Microbiol.">
        <title>The genome sequence of Desulfatibacillum alkenivorans AK-01: a blueprint for anaerobic alkane oxidation.</title>
        <authorList>
            <person name="Callaghan A.V."/>
            <person name="Morris B.E."/>
            <person name="Pereira I.A."/>
            <person name="McInerney M.J."/>
            <person name="Austin R.N."/>
            <person name="Groves J.T."/>
            <person name="Kukor J.J."/>
            <person name="Suflita J.M."/>
            <person name="Young L.Y."/>
            <person name="Zylstra G.J."/>
            <person name="Wawrik B."/>
        </authorList>
    </citation>
    <scope>NUCLEOTIDE SEQUENCE [LARGE SCALE GENOMIC DNA]</scope>
    <source>
        <strain>AK-01</strain>
    </source>
</reference>
<accession>B8FJW2</accession>
<protein>
    <recommendedName>
        <fullName evidence="1">Hydroxyethylthiazole kinase</fullName>
        <ecNumber evidence="1">2.7.1.50</ecNumber>
    </recommendedName>
    <alternativeName>
        <fullName evidence="1">4-methyl-5-beta-hydroxyethylthiazole kinase</fullName>
        <shortName evidence="1">TH kinase</shortName>
        <shortName evidence="1">Thz kinase</shortName>
    </alternativeName>
</protein>
<comment type="function">
    <text evidence="1">Catalyzes the phosphorylation of the hydroxyl group of 4-methyl-5-beta-hydroxyethylthiazole (THZ).</text>
</comment>
<comment type="catalytic activity">
    <reaction evidence="1">
        <text>5-(2-hydroxyethyl)-4-methylthiazole + ATP = 4-methyl-5-(2-phosphooxyethyl)-thiazole + ADP + H(+)</text>
        <dbReference type="Rhea" id="RHEA:24212"/>
        <dbReference type="ChEBI" id="CHEBI:15378"/>
        <dbReference type="ChEBI" id="CHEBI:17957"/>
        <dbReference type="ChEBI" id="CHEBI:30616"/>
        <dbReference type="ChEBI" id="CHEBI:58296"/>
        <dbReference type="ChEBI" id="CHEBI:456216"/>
        <dbReference type="EC" id="2.7.1.50"/>
    </reaction>
</comment>
<comment type="cofactor">
    <cofactor evidence="1">
        <name>Mg(2+)</name>
        <dbReference type="ChEBI" id="CHEBI:18420"/>
    </cofactor>
</comment>
<comment type="pathway">
    <text evidence="1">Cofactor biosynthesis; thiamine diphosphate biosynthesis; 4-methyl-5-(2-phosphoethyl)-thiazole from 5-(2-hydroxyethyl)-4-methylthiazole: step 1/1.</text>
</comment>
<comment type="similarity">
    <text evidence="1">Belongs to the Thz kinase family.</text>
</comment>
<evidence type="ECO:0000255" key="1">
    <source>
        <dbReference type="HAMAP-Rule" id="MF_00228"/>
    </source>
</evidence>